<organism>
    <name type="scientific">Yersinia pestis (strain Pestoides F)</name>
    <dbReference type="NCBI Taxonomy" id="386656"/>
    <lineage>
        <taxon>Bacteria</taxon>
        <taxon>Pseudomonadati</taxon>
        <taxon>Pseudomonadota</taxon>
        <taxon>Gammaproteobacteria</taxon>
        <taxon>Enterobacterales</taxon>
        <taxon>Yersiniaceae</taxon>
        <taxon>Yersinia</taxon>
    </lineage>
</organism>
<reference key="1">
    <citation type="submission" date="2007-02" db="EMBL/GenBank/DDBJ databases">
        <title>Complete sequence of chromosome of Yersinia pestis Pestoides F.</title>
        <authorList>
            <consortium name="US DOE Joint Genome Institute"/>
            <person name="Copeland A."/>
            <person name="Lucas S."/>
            <person name="Lapidus A."/>
            <person name="Barry K."/>
            <person name="Detter J.C."/>
            <person name="Glavina del Rio T."/>
            <person name="Hammon N."/>
            <person name="Israni S."/>
            <person name="Dalin E."/>
            <person name="Tice H."/>
            <person name="Pitluck S."/>
            <person name="Di Bartolo G."/>
            <person name="Chain P."/>
            <person name="Malfatti S."/>
            <person name="Shin M."/>
            <person name="Vergez L."/>
            <person name="Schmutz J."/>
            <person name="Larimer F."/>
            <person name="Land M."/>
            <person name="Hauser L."/>
            <person name="Worsham P."/>
            <person name="Chu M."/>
            <person name="Bearden S."/>
            <person name="Garcia E."/>
            <person name="Richardson P."/>
        </authorList>
    </citation>
    <scope>NUCLEOTIDE SEQUENCE [LARGE SCALE GENOMIC DNA]</scope>
    <source>
        <strain>Pestoides F</strain>
    </source>
</reference>
<protein>
    <recommendedName>
        <fullName evidence="1">Shikimate kinase 1</fullName>
        <shortName evidence="1">SK 1</shortName>
        <ecNumber evidence="1">2.7.1.71</ecNumber>
    </recommendedName>
</protein>
<proteinExistence type="inferred from homology"/>
<name>AROK_YERPP</name>
<accession>A4TGU1</accession>
<feature type="chain" id="PRO_1000023009" description="Shikimate kinase 1">
    <location>
        <begin position="1"/>
        <end position="173"/>
    </location>
</feature>
<feature type="binding site" evidence="1">
    <location>
        <begin position="14"/>
        <end position="19"/>
    </location>
    <ligand>
        <name>ATP</name>
        <dbReference type="ChEBI" id="CHEBI:30616"/>
    </ligand>
</feature>
<feature type="binding site" evidence="1">
    <location>
        <position position="18"/>
    </location>
    <ligand>
        <name>Mg(2+)</name>
        <dbReference type="ChEBI" id="CHEBI:18420"/>
    </ligand>
</feature>
<feature type="binding site" evidence="1">
    <location>
        <position position="36"/>
    </location>
    <ligand>
        <name>substrate</name>
    </ligand>
</feature>
<feature type="binding site" evidence="1">
    <location>
        <position position="60"/>
    </location>
    <ligand>
        <name>substrate</name>
    </ligand>
</feature>
<feature type="binding site" evidence="1">
    <location>
        <position position="82"/>
    </location>
    <ligand>
        <name>substrate</name>
    </ligand>
</feature>
<feature type="binding site" evidence="1">
    <location>
        <position position="120"/>
    </location>
    <ligand>
        <name>ATP</name>
        <dbReference type="ChEBI" id="CHEBI:30616"/>
    </ligand>
</feature>
<feature type="binding site" evidence="1">
    <location>
        <position position="140"/>
    </location>
    <ligand>
        <name>substrate</name>
    </ligand>
</feature>
<feature type="binding site" evidence="1">
    <location>
        <position position="157"/>
    </location>
    <ligand>
        <name>ATP</name>
        <dbReference type="ChEBI" id="CHEBI:30616"/>
    </ligand>
</feature>
<comment type="function">
    <text evidence="1">Catalyzes the specific phosphorylation of the 3-hydroxyl group of shikimic acid using ATP as a cosubstrate.</text>
</comment>
<comment type="catalytic activity">
    <reaction evidence="1">
        <text>shikimate + ATP = 3-phosphoshikimate + ADP + H(+)</text>
        <dbReference type="Rhea" id="RHEA:13121"/>
        <dbReference type="ChEBI" id="CHEBI:15378"/>
        <dbReference type="ChEBI" id="CHEBI:30616"/>
        <dbReference type="ChEBI" id="CHEBI:36208"/>
        <dbReference type="ChEBI" id="CHEBI:145989"/>
        <dbReference type="ChEBI" id="CHEBI:456216"/>
        <dbReference type="EC" id="2.7.1.71"/>
    </reaction>
</comment>
<comment type="cofactor">
    <cofactor evidence="1">
        <name>Mg(2+)</name>
        <dbReference type="ChEBI" id="CHEBI:18420"/>
    </cofactor>
    <text evidence="1">Binds 1 Mg(2+) ion per subunit.</text>
</comment>
<comment type="pathway">
    <text evidence="1">Metabolic intermediate biosynthesis; chorismate biosynthesis; chorismate from D-erythrose 4-phosphate and phosphoenolpyruvate: step 5/7.</text>
</comment>
<comment type="subunit">
    <text evidence="1">Monomer.</text>
</comment>
<comment type="subcellular location">
    <subcellularLocation>
        <location evidence="1">Cytoplasm</location>
    </subcellularLocation>
</comment>
<comment type="similarity">
    <text evidence="1">Belongs to the shikimate kinase family.</text>
</comment>
<evidence type="ECO:0000255" key="1">
    <source>
        <dbReference type="HAMAP-Rule" id="MF_00109"/>
    </source>
</evidence>
<gene>
    <name evidence="1" type="primary">aroK</name>
    <name type="ordered locus">YPDSF_0078</name>
</gene>
<sequence length="173" mass="19532">MAEKRNIFLVGPMGAGKSTIGRQLAQQLNMEFFDSDQEIERRTGADVGWVFDVEGEEGFRDREEKVINELTEKQGIVLATGGGSVKSRETRNRLSARGVVVYLETTIEKQLARTQRDKKRPLLQVDEPPREVLEALAKERNPLYEEIADVTIRTDDQSAKVVANQIINMLESN</sequence>
<keyword id="KW-0028">Amino-acid biosynthesis</keyword>
<keyword id="KW-0057">Aromatic amino acid biosynthesis</keyword>
<keyword id="KW-0067">ATP-binding</keyword>
<keyword id="KW-0963">Cytoplasm</keyword>
<keyword id="KW-0418">Kinase</keyword>
<keyword id="KW-0460">Magnesium</keyword>
<keyword id="KW-0479">Metal-binding</keyword>
<keyword id="KW-0547">Nucleotide-binding</keyword>
<keyword id="KW-0808">Transferase</keyword>
<dbReference type="EC" id="2.7.1.71" evidence="1"/>
<dbReference type="EMBL" id="CP000668">
    <property type="protein sequence ID" value="ABP38504.1"/>
    <property type="molecule type" value="Genomic_DNA"/>
</dbReference>
<dbReference type="RefSeq" id="WP_002208899.1">
    <property type="nucleotide sequence ID" value="NZ_CP009715.1"/>
</dbReference>
<dbReference type="SMR" id="A4TGU1"/>
<dbReference type="GeneID" id="96663260"/>
<dbReference type="KEGG" id="ypp:YPDSF_0078"/>
<dbReference type="PATRIC" id="fig|386656.14.peg.490"/>
<dbReference type="UniPathway" id="UPA00053">
    <property type="reaction ID" value="UER00088"/>
</dbReference>
<dbReference type="GO" id="GO:0005829">
    <property type="term" value="C:cytosol"/>
    <property type="evidence" value="ECO:0007669"/>
    <property type="project" value="TreeGrafter"/>
</dbReference>
<dbReference type="GO" id="GO:0005524">
    <property type="term" value="F:ATP binding"/>
    <property type="evidence" value="ECO:0007669"/>
    <property type="project" value="UniProtKB-UniRule"/>
</dbReference>
<dbReference type="GO" id="GO:0000287">
    <property type="term" value="F:magnesium ion binding"/>
    <property type="evidence" value="ECO:0007669"/>
    <property type="project" value="UniProtKB-UniRule"/>
</dbReference>
<dbReference type="GO" id="GO:0004765">
    <property type="term" value="F:shikimate kinase activity"/>
    <property type="evidence" value="ECO:0007669"/>
    <property type="project" value="UniProtKB-UniRule"/>
</dbReference>
<dbReference type="GO" id="GO:0008652">
    <property type="term" value="P:amino acid biosynthetic process"/>
    <property type="evidence" value="ECO:0007669"/>
    <property type="project" value="UniProtKB-KW"/>
</dbReference>
<dbReference type="GO" id="GO:0009073">
    <property type="term" value="P:aromatic amino acid family biosynthetic process"/>
    <property type="evidence" value="ECO:0007669"/>
    <property type="project" value="UniProtKB-KW"/>
</dbReference>
<dbReference type="GO" id="GO:0009423">
    <property type="term" value="P:chorismate biosynthetic process"/>
    <property type="evidence" value="ECO:0007669"/>
    <property type="project" value="UniProtKB-UniRule"/>
</dbReference>
<dbReference type="CDD" id="cd00464">
    <property type="entry name" value="SK"/>
    <property type="match status" value="1"/>
</dbReference>
<dbReference type="FunFam" id="3.40.50.300:FF:000099">
    <property type="entry name" value="Shikimate kinase 1"/>
    <property type="match status" value="1"/>
</dbReference>
<dbReference type="Gene3D" id="3.40.50.300">
    <property type="entry name" value="P-loop containing nucleotide triphosphate hydrolases"/>
    <property type="match status" value="1"/>
</dbReference>
<dbReference type="HAMAP" id="MF_00109">
    <property type="entry name" value="Shikimate_kinase"/>
    <property type="match status" value="1"/>
</dbReference>
<dbReference type="InterPro" id="IPR027417">
    <property type="entry name" value="P-loop_NTPase"/>
</dbReference>
<dbReference type="InterPro" id="IPR031322">
    <property type="entry name" value="Shikimate/glucono_kinase"/>
</dbReference>
<dbReference type="InterPro" id="IPR000623">
    <property type="entry name" value="Shikimate_kinase/TSH1"/>
</dbReference>
<dbReference type="InterPro" id="IPR023000">
    <property type="entry name" value="Shikimate_kinase_CS"/>
</dbReference>
<dbReference type="NCBIfam" id="NF003456">
    <property type="entry name" value="PRK05057.1"/>
    <property type="match status" value="1"/>
</dbReference>
<dbReference type="PANTHER" id="PTHR21087">
    <property type="entry name" value="SHIKIMATE KINASE"/>
    <property type="match status" value="1"/>
</dbReference>
<dbReference type="PANTHER" id="PTHR21087:SF16">
    <property type="entry name" value="SHIKIMATE KINASE 1, CHLOROPLASTIC"/>
    <property type="match status" value="1"/>
</dbReference>
<dbReference type="Pfam" id="PF01202">
    <property type="entry name" value="SKI"/>
    <property type="match status" value="1"/>
</dbReference>
<dbReference type="PRINTS" id="PR01100">
    <property type="entry name" value="SHIKIMTKNASE"/>
</dbReference>
<dbReference type="SUPFAM" id="SSF52540">
    <property type="entry name" value="P-loop containing nucleoside triphosphate hydrolases"/>
    <property type="match status" value="1"/>
</dbReference>
<dbReference type="PROSITE" id="PS01128">
    <property type="entry name" value="SHIKIMATE_KINASE"/>
    <property type="match status" value="1"/>
</dbReference>